<comment type="induction">
    <text evidence="1">Expressed during exponential phase (at protein level).</text>
</comment>
<protein>
    <recommendedName>
        <fullName>Uncharacterized protein YceO</fullName>
    </recommendedName>
</protein>
<keyword id="KW-1185">Reference proteome</keyword>
<proteinExistence type="evidence at protein level"/>
<name>YCEO_ECOLI</name>
<sequence>MRPFLQEYLMRRLLHYLINNIREHLMLYLFLWGLLAIMDLIYVFYF</sequence>
<organism>
    <name type="scientific">Escherichia coli (strain K12)</name>
    <dbReference type="NCBI Taxonomy" id="83333"/>
    <lineage>
        <taxon>Bacteria</taxon>
        <taxon>Pseudomonadati</taxon>
        <taxon>Pseudomonadota</taxon>
        <taxon>Gammaproteobacteria</taxon>
        <taxon>Enterobacterales</taxon>
        <taxon>Enterobacteriaceae</taxon>
        <taxon>Escherichia</taxon>
    </lineage>
</organism>
<gene>
    <name type="primary">yceO</name>
    <name type="ordered locus">b1058</name>
    <name type="ordered locus">JW1045</name>
</gene>
<accession>P64442</accession>
<accession>P75926</accession>
<accession>Q2MBI4</accession>
<dbReference type="EMBL" id="U00096">
    <property type="protein sequence ID" value="AAC74142.1"/>
    <property type="molecule type" value="Genomic_DNA"/>
</dbReference>
<dbReference type="EMBL" id="AP009048">
    <property type="protein sequence ID" value="BAE76372.1"/>
    <property type="molecule type" value="Genomic_DNA"/>
</dbReference>
<dbReference type="PIR" id="G64848">
    <property type="entry name" value="G64848"/>
</dbReference>
<dbReference type="RefSeq" id="NP_415576.1">
    <property type="nucleotide sequence ID" value="NC_000913.3"/>
</dbReference>
<dbReference type="BioGRID" id="4261753">
    <property type="interactions" value="5"/>
</dbReference>
<dbReference type="FunCoup" id="P64442">
    <property type="interactions" value="10"/>
</dbReference>
<dbReference type="STRING" id="511145.b1058"/>
<dbReference type="PaxDb" id="511145-b1058"/>
<dbReference type="EnsemblBacteria" id="AAC74142">
    <property type="protein sequence ID" value="AAC74142"/>
    <property type="gene ID" value="b1058"/>
</dbReference>
<dbReference type="GeneID" id="945629"/>
<dbReference type="KEGG" id="ecj:JW1045"/>
<dbReference type="KEGG" id="eco:b1058"/>
<dbReference type="PATRIC" id="fig|511145.12.peg.1100"/>
<dbReference type="EchoBASE" id="EB4080"/>
<dbReference type="eggNOG" id="ENOG5033ASZ">
    <property type="taxonomic scope" value="Bacteria"/>
</dbReference>
<dbReference type="HOGENOM" id="CLU_212603_0_0_6"/>
<dbReference type="InParanoid" id="P64442"/>
<dbReference type="OrthoDB" id="6637833at2"/>
<dbReference type="PhylomeDB" id="P64442"/>
<dbReference type="BioCyc" id="EcoCyc:G6555-MONOMER"/>
<dbReference type="PRO" id="PR:P64442"/>
<dbReference type="Proteomes" id="UP000000625">
    <property type="component" value="Chromosome"/>
</dbReference>
<dbReference type="GO" id="GO:0010447">
    <property type="term" value="P:response to acidic pH"/>
    <property type="evidence" value="ECO:0000315"/>
    <property type="project" value="EcoCyc"/>
</dbReference>
<dbReference type="GO" id="GO:0044010">
    <property type="term" value="P:single-species biofilm formation"/>
    <property type="evidence" value="ECO:0000315"/>
    <property type="project" value="EcoCyc"/>
</dbReference>
<dbReference type="InterPro" id="IPR024494">
    <property type="entry name" value="DUF2770"/>
</dbReference>
<dbReference type="Pfam" id="PF10968">
    <property type="entry name" value="DUF2770"/>
    <property type="match status" value="1"/>
</dbReference>
<reference key="1">
    <citation type="journal article" date="1997" name="Science">
        <title>The complete genome sequence of Escherichia coli K-12.</title>
        <authorList>
            <person name="Blattner F.R."/>
            <person name="Plunkett G. III"/>
            <person name="Bloch C.A."/>
            <person name="Perna N.T."/>
            <person name="Burland V."/>
            <person name="Riley M."/>
            <person name="Collado-Vides J."/>
            <person name="Glasner J.D."/>
            <person name="Rode C.K."/>
            <person name="Mayhew G.F."/>
            <person name="Gregor J."/>
            <person name="Davis N.W."/>
            <person name="Kirkpatrick H.A."/>
            <person name="Goeden M.A."/>
            <person name="Rose D.J."/>
            <person name="Mau B."/>
            <person name="Shao Y."/>
        </authorList>
    </citation>
    <scope>NUCLEOTIDE SEQUENCE [LARGE SCALE GENOMIC DNA]</scope>
    <source>
        <strain>K12 / MG1655 / ATCC 47076</strain>
    </source>
</reference>
<reference key="2">
    <citation type="journal article" date="2006" name="Mol. Syst. Biol.">
        <title>Highly accurate genome sequences of Escherichia coli K-12 strains MG1655 and W3110.</title>
        <authorList>
            <person name="Hayashi K."/>
            <person name="Morooka N."/>
            <person name="Yamamoto Y."/>
            <person name="Fujita K."/>
            <person name="Isono K."/>
            <person name="Choi S."/>
            <person name="Ohtsubo E."/>
            <person name="Baba T."/>
            <person name="Wanner B.L."/>
            <person name="Mori H."/>
            <person name="Horiuchi T."/>
        </authorList>
    </citation>
    <scope>NUCLEOTIDE SEQUENCE [LARGE SCALE GENOMIC DNA]</scope>
    <source>
        <strain>K12 / W3110 / ATCC 27325 / DSM 5911</strain>
    </source>
</reference>
<reference key="3">
    <citation type="journal article" date="2008" name="Mol. Microbiol.">
        <title>Small membrane proteins found by comparative genomics and ribosome binding site models.</title>
        <authorList>
            <person name="Hemm M.R."/>
            <person name="Paul B.J."/>
            <person name="Schneider T.D."/>
            <person name="Storz G."/>
            <person name="Rudd K.E."/>
        </authorList>
    </citation>
    <scope>INDUCTION</scope>
    <source>
        <strain>K12 / MG1655 / ATCC 47076</strain>
    </source>
</reference>
<evidence type="ECO:0000269" key="1">
    <source>
    </source>
</evidence>
<feature type="chain" id="PRO_0000168820" description="Uncharacterized protein YceO">
    <location>
        <begin position="1"/>
        <end position="46"/>
    </location>
</feature>